<organism>
    <name type="scientific">Bos taurus</name>
    <name type="common">Bovine</name>
    <dbReference type="NCBI Taxonomy" id="9913"/>
    <lineage>
        <taxon>Eukaryota</taxon>
        <taxon>Metazoa</taxon>
        <taxon>Chordata</taxon>
        <taxon>Craniata</taxon>
        <taxon>Vertebrata</taxon>
        <taxon>Euteleostomi</taxon>
        <taxon>Mammalia</taxon>
        <taxon>Eutheria</taxon>
        <taxon>Laurasiatheria</taxon>
        <taxon>Artiodactyla</taxon>
        <taxon>Ruminantia</taxon>
        <taxon>Pecora</taxon>
        <taxon>Bovidae</taxon>
        <taxon>Bovinae</taxon>
        <taxon>Bos</taxon>
    </lineage>
</organism>
<reference key="1">
    <citation type="submission" date="2005-11" db="EMBL/GenBank/DDBJ databases">
        <authorList>
            <consortium name="NIH - Mammalian Gene Collection (MGC) project"/>
        </authorList>
    </citation>
    <scope>NUCLEOTIDE SEQUENCE [LARGE SCALE MRNA]</scope>
    <source>
        <strain>Crossbred X Angus</strain>
        <tissue>Liver</tissue>
    </source>
</reference>
<sequence length="284" mass="32810">MTTPQFYCQYCMASLLGKKYVLKDDNPYCVSCYDRIFSNYCEECKEPIESGSKDLCYKGHHWHEGCFNCTKCNHSLVEKPFAAKDERLLCSECYSNECSSKCFHCKKTIMPGSRKMEFKGNYWHETCFVCEHCRQPIGTKPLISKESGNYCVPCFEKEFAHYCSFCKKVITSGGITFRDQPWHKECFLCSGCRKELCEEEFMSRDDYPFCLDCYNHLYAKKCAACTKPITGLRGAKFICFQDRQWHSECFNCGKCSVSLVGEGFLTHNKEIFCRKCGSGVDTDI</sequence>
<name>FHL5_BOVIN</name>
<evidence type="ECO:0000250" key="1"/>
<evidence type="ECO:0000250" key="2">
    <source>
        <dbReference type="UniProtKB" id="Q9WTX7"/>
    </source>
</evidence>
<evidence type="ECO:0000255" key="3"/>
<evidence type="ECO:0000255" key="4">
    <source>
        <dbReference type="PROSITE-ProRule" id="PRU00125"/>
    </source>
</evidence>
<protein>
    <recommendedName>
        <fullName>Four and a half LIM domains protein 5</fullName>
        <shortName>FHL-5</shortName>
    </recommendedName>
</protein>
<accession>Q2YDK0</accession>
<keyword id="KW-0440">LIM domain</keyword>
<keyword id="KW-0479">Metal-binding</keyword>
<keyword id="KW-0539">Nucleus</keyword>
<keyword id="KW-1185">Reference proteome</keyword>
<keyword id="KW-0677">Repeat</keyword>
<keyword id="KW-0862">Zinc</keyword>
<keyword id="KW-0863">Zinc-finger</keyword>
<proteinExistence type="evidence at transcript level"/>
<dbReference type="EMBL" id="BC110187">
    <property type="protein sequence ID" value="AAI10188.1"/>
    <property type="molecule type" value="mRNA"/>
</dbReference>
<dbReference type="RefSeq" id="NP_001069847.1">
    <property type="nucleotide sequence ID" value="NM_001076379.2"/>
</dbReference>
<dbReference type="RefSeq" id="XP_010806794.1">
    <property type="nucleotide sequence ID" value="XM_010808492.4"/>
</dbReference>
<dbReference type="SMR" id="Q2YDK0"/>
<dbReference type="FunCoup" id="Q2YDK0">
    <property type="interactions" value="46"/>
</dbReference>
<dbReference type="STRING" id="9913.ENSBTAP00000063278"/>
<dbReference type="PaxDb" id="9913-ENSBTAP00000002359"/>
<dbReference type="Ensembl" id="ENSBTAT00000002359.4">
    <property type="protein sequence ID" value="ENSBTAP00000002359.3"/>
    <property type="gene ID" value="ENSBTAG00000001803.5"/>
</dbReference>
<dbReference type="GeneID" id="615499"/>
<dbReference type="KEGG" id="bta:615499"/>
<dbReference type="CTD" id="9457"/>
<dbReference type="VEuPathDB" id="HostDB:ENSBTAG00000001803"/>
<dbReference type="VGNC" id="VGNC:29002">
    <property type="gene designation" value="FHL5"/>
</dbReference>
<dbReference type="eggNOG" id="KOG1704">
    <property type="taxonomic scope" value="Eukaryota"/>
</dbReference>
<dbReference type="GeneTree" id="ENSGT00950000183028"/>
<dbReference type="HOGENOM" id="CLU_001357_2_0_1"/>
<dbReference type="InParanoid" id="Q2YDK0"/>
<dbReference type="OMA" id="ERCFNCA"/>
<dbReference type="OrthoDB" id="274660at2759"/>
<dbReference type="TreeFam" id="TF314113"/>
<dbReference type="Proteomes" id="UP000009136">
    <property type="component" value="Chromosome 9"/>
</dbReference>
<dbReference type="Bgee" id="ENSBTAG00000001803">
    <property type="expression patterns" value="Expressed in semen and 75 other cell types or tissues"/>
</dbReference>
<dbReference type="GO" id="GO:0005634">
    <property type="term" value="C:nucleus"/>
    <property type="evidence" value="ECO:0000318"/>
    <property type="project" value="GO_Central"/>
</dbReference>
<dbReference type="GO" id="GO:0030018">
    <property type="term" value="C:Z disc"/>
    <property type="evidence" value="ECO:0000318"/>
    <property type="project" value="GO_Central"/>
</dbReference>
<dbReference type="GO" id="GO:0003713">
    <property type="term" value="F:transcription coactivator activity"/>
    <property type="evidence" value="ECO:0000318"/>
    <property type="project" value="GO_Central"/>
</dbReference>
<dbReference type="GO" id="GO:0008270">
    <property type="term" value="F:zinc ion binding"/>
    <property type="evidence" value="ECO:0007669"/>
    <property type="project" value="UniProtKB-KW"/>
</dbReference>
<dbReference type="GO" id="GO:0045944">
    <property type="term" value="P:positive regulation of transcription by RNA polymerase II"/>
    <property type="evidence" value="ECO:0000318"/>
    <property type="project" value="GO_Central"/>
</dbReference>
<dbReference type="CDD" id="cd09428">
    <property type="entry name" value="LIM2_FHL5"/>
    <property type="match status" value="1"/>
</dbReference>
<dbReference type="CDD" id="cd09346">
    <property type="entry name" value="LIM3_FHL"/>
    <property type="match status" value="1"/>
</dbReference>
<dbReference type="CDD" id="cd09347">
    <property type="entry name" value="LIM4_FHL"/>
    <property type="match status" value="1"/>
</dbReference>
<dbReference type="FunFam" id="2.10.110.10:FF:000013">
    <property type="entry name" value="Four and a half LIM domains 1"/>
    <property type="match status" value="1"/>
</dbReference>
<dbReference type="FunFam" id="2.10.110.10:FF:000030">
    <property type="entry name" value="Four and a half LIM domains protein 2"/>
    <property type="match status" value="1"/>
</dbReference>
<dbReference type="FunFam" id="2.10.110.10:FF:000048">
    <property type="entry name" value="Four and a half LIM domains protein 2"/>
    <property type="match status" value="1"/>
</dbReference>
<dbReference type="FunFam" id="2.10.110.10:FF:000049">
    <property type="entry name" value="Four and a half LIM domains protein 2"/>
    <property type="match status" value="1"/>
</dbReference>
<dbReference type="Gene3D" id="2.10.110.10">
    <property type="entry name" value="Cysteine Rich Protein"/>
    <property type="match status" value="5"/>
</dbReference>
<dbReference type="InterPro" id="IPR042947">
    <property type="entry name" value="FHL5_LIM2"/>
</dbReference>
<dbReference type="InterPro" id="IPR056807">
    <property type="entry name" value="LIM_FHL1/2/3/5_N"/>
</dbReference>
<dbReference type="InterPro" id="IPR001781">
    <property type="entry name" value="Znf_LIM"/>
</dbReference>
<dbReference type="PANTHER" id="PTHR24205">
    <property type="entry name" value="FOUR AND A HALF LIM DOMAINS PROTEIN"/>
    <property type="match status" value="1"/>
</dbReference>
<dbReference type="PANTHER" id="PTHR24205:SF7">
    <property type="entry name" value="FOUR AND A HALF LIM DOMAINS PROTEIN 5"/>
    <property type="match status" value="1"/>
</dbReference>
<dbReference type="Pfam" id="PF00412">
    <property type="entry name" value="LIM"/>
    <property type="match status" value="4"/>
</dbReference>
<dbReference type="Pfam" id="PF25076">
    <property type="entry name" value="LIM_FHL2-3_N"/>
    <property type="match status" value="1"/>
</dbReference>
<dbReference type="SMART" id="SM00132">
    <property type="entry name" value="LIM"/>
    <property type="match status" value="4"/>
</dbReference>
<dbReference type="SUPFAM" id="SSF57716">
    <property type="entry name" value="Glucocorticoid receptor-like (DNA-binding domain)"/>
    <property type="match status" value="5"/>
</dbReference>
<dbReference type="PROSITE" id="PS00478">
    <property type="entry name" value="LIM_DOMAIN_1"/>
    <property type="match status" value="4"/>
</dbReference>
<dbReference type="PROSITE" id="PS50023">
    <property type="entry name" value="LIM_DOMAIN_2"/>
    <property type="match status" value="4"/>
</dbReference>
<comment type="function">
    <text evidence="1">May be involved in the regulation of spermatogenesis. Stimulates CREM transcriptional activity in a phosphorylation-independent manner (By similarity).</text>
</comment>
<comment type="subunit">
    <text evidence="2">Interacts with CREM (via the third LIM domain). Interacts (via second LIM domain) with SPAG8.</text>
</comment>
<comment type="subcellular location">
    <subcellularLocation>
        <location evidence="1">Nucleus</location>
    </subcellularLocation>
    <text evidence="1">Nuclei of round and elongated spermatids.</text>
</comment>
<gene>
    <name type="primary">FHL5</name>
</gene>
<feature type="chain" id="PRO_0000284660" description="Four and a half LIM domains protein 5">
    <location>
        <begin position="1"/>
        <end position="284"/>
    </location>
</feature>
<feature type="domain" description="LIM zinc-binding 1" evidence="4">
    <location>
        <begin position="39"/>
        <end position="100"/>
    </location>
</feature>
<feature type="domain" description="LIM zinc-binding 2" evidence="4">
    <location>
        <begin position="101"/>
        <end position="160"/>
    </location>
</feature>
<feature type="domain" description="LIM zinc-binding 3" evidence="4">
    <location>
        <begin position="161"/>
        <end position="220"/>
    </location>
</feature>
<feature type="domain" description="LIM zinc-binding 4" evidence="4">
    <location>
        <begin position="223"/>
        <end position="283"/>
    </location>
</feature>
<feature type="zinc finger region" description="C4-type" evidence="3">
    <location>
        <begin position="8"/>
        <end position="32"/>
    </location>
</feature>